<reference key="1">
    <citation type="journal article" date="2008" name="J. Bacteriol.">
        <title>The pangenome structure of Escherichia coli: comparative genomic analysis of E. coli commensal and pathogenic isolates.</title>
        <authorList>
            <person name="Rasko D.A."/>
            <person name="Rosovitz M.J."/>
            <person name="Myers G.S.A."/>
            <person name="Mongodin E.F."/>
            <person name="Fricke W.F."/>
            <person name="Gajer P."/>
            <person name="Crabtree J."/>
            <person name="Sebaihia M."/>
            <person name="Thomson N.R."/>
            <person name="Chaudhuri R."/>
            <person name="Henderson I.R."/>
            <person name="Sperandio V."/>
            <person name="Ravel J."/>
        </authorList>
    </citation>
    <scope>NUCLEOTIDE SEQUENCE [LARGE SCALE GENOMIC DNA]</scope>
    <source>
        <strain>E24377A / ETEC</strain>
    </source>
</reference>
<keyword id="KW-1185">Reference proteome</keyword>
<proteinExistence type="inferred from homology"/>
<feature type="chain" id="PRO_1000061969" description="Putative double-stranded DNA mimic protein YciU">
    <location>
        <begin position="1"/>
        <end position="109"/>
    </location>
</feature>
<accession>A7ZL19</accession>
<sequence length="109" mass="12687">MDMDLNNRLTEDETLEQAYDIFLELAADNLDPADVLLFNLQFEERGGAELFDPAEDWQEHVDFDLNPDFFAEVVIGLADSEDGEINDVFARILLCREKDHKLCHIIWRE</sequence>
<evidence type="ECO:0000255" key="1">
    <source>
        <dbReference type="HAMAP-Rule" id="MF_00680"/>
    </source>
</evidence>
<organism>
    <name type="scientific">Escherichia coli O139:H28 (strain E24377A / ETEC)</name>
    <dbReference type="NCBI Taxonomy" id="331111"/>
    <lineage>
        <taxon>Bacteria</taxon>
        <taxon>Pseudomonadati</taxon>
        <taxon>Pseudomonadota</taxon>
        <taxon>Gammaproteobacteria</taxon>
        <taxon>Enterobacterales</taxon>
        <taxon>Enterobacteriaceae</taxon>
        <taxon>Escherichia</taxon>
    </lineage>
</organism>
<gene>
    <name evidence="1" type="primary">yciU</name>
    <name type="ordered locus">EcE24377A_1396</name>
</gene>
<name>YCIU_ECO24</name>
<dbReference type="EMBL" id="CP000800">
    <property type="protein sequence ID" value="ABV16808.1"/>
    <property type="molecule type" value="Genomic_DNA"/>
</dbReference>
<dbReference type="RefSeq" id="WP_000366959.1">
    <property type="nucleotide sequence ID" value="NC_009801.1"/>
</dbReference>
<dbReference type="SMR" id="A7ZL19"/>
<dbReference type="KEGG" id="ecw:EcE24377A_1396"/>
<dbReference type="HOGENOM" id="CLU_143392_0_0_6"/>
<dbReference type="Proteomes" id="UP000001122">
    <property type="component" value="Chromosome"/>
</dbReference>
<dbReference type="Gene3D" id="3.10.450.140">
    <property type="entry name" value="dsDNA mimic, putative"/>
    <property type="match status" value="1"/>
</dbReference>
<dbReference type="HAMAP" id="MF_00680">
    <property type="entry name" value="Put_dsDNA_mimic"/>
    <property type="match status" value="1"/>
</dbReference>
<dbReference type="InterPro" id="IPR007376">
    <property type="entry name" value="dsDNA_mimic_put"/>
</dbReference>
<dbReference type="InterPro" id="IPR036763">
    <property type="entry name" value="Put_dsDNA_mimic_sf"/>
</dbReference>
<dbReference type="NCBIfam" id="NF003469">
    <property type="entry name" value="PRK05094.1"/>
    <property type="match status" value="1"/>
</dbReference>
<dbReference type="Pfam" id="PF04269">
    <property type="entry name" value="DUF440"/>
    <property type="match status" value="1"/>
</dbReference>
<dbReference type="PIRSF" id="PIRSF004916">
    <property type="entry name" value="UCP004916"/>
    <property type="match status" value="1"/>
</dbReference>
<dbReference type="SUPFAM" id="SSF102816">
    <property type="entry name" value="Putative dsDNA mimic"/>
    <property type="match status" value="1"/>
</dbReference>
<protein>
    <recommendedName>
        <fullName evidence="1">Putative double-stranded DNA mimic protein YciU</fullName>
    </recommendedName>
</protein>
<comment type="function">
    <text evidence="1">May act as a double-stranded DNA (dsDNA) mimic. Probably regulates the activity of a dsDNA-binding protein.</text>
</comment>
<comment type="similarity">
    <text evidence="1">Belongs to the putative dsDNA mimic protein family.</text>
</comment>